<comment type="function">
    <text evidence="2">Participates in transcription elongation, termination and antitermination. In the absence of Rho, increases the rate of transcription elongation by the RNA polymerase (RNAP), probably by partially suppressing pausing. In the presence of Rho, modulates most Rho-dependent termination events by interacting with the RNAP to render the complex more susceptible to the termination activity of Rho. May be required to overcome a kinetic limitation of Rho to function at certain terminators. Also involved in ribosomal RNA transcriptional antitermination.</text>
</comment>
<comment type="subunit">
    <text evidence="2">Monomer. Interacts with the transcription termination factor Rho and with RNA polymerase.</text>
</comment>
<comment type="similarity">
    <text evidence="2">Belongs to the NusG family.</text>
</comment>
<dbReference type="EMBL" id="AL513382">
    <property type="protein sequence ID" value="CAD09492.1"/>
    <property type="molecule type" value="Genomic_DNA"/>
</dbReference>
<dbReference type="EMBL" id="AE014613">
    <property type="protein sequence ID" value="AAO70995.1"/>
    <property type="molecule type" value="Genomic_DNA"/>
</dbReference>
<dbReference type="RefSeq" id="NP_457922.1">
    <property type="nucleotide sequence ID" value="NC_003198.1"/>
</dbReference>
<dbReference type="RefSeq" id="WP_001287521.1">
    <property type="nucleotide sequence ID" value="NZ_WSUR01000043.1"/>
</dbReference>
<dbReference type="BMRB" id="P0AA03"/>
<dbReference type="SMR" id="P0AA03"/>
<dbReference type="STRING" id="220341.gene:17587593"/>
<dbReference type="GeneID" id="93251707"/>
<dbReference type="KEGG" id="stt:t3479"/>
<dbReference type="KEGG" id="sty:STY3737"/>
<dbReference type="PATRIC" id="fig|220341.7.peg.3810"/>
<dbReference type="eggNOG" id="COG0250">
    <property type="taxonomic scope" value="Bacteria"/>
</dbReference>
<dbReference type="HOGENOM" id="CLU_067287_1_0_6"/>
<dbReference type="OMA" id="EWYVIHT"/>
<dbReference type="OrthoDB" id="9809075at2"/>
<dbReference type="Proteomes" id="UP000000541">
    <property type="component" value="Chromosome"/>
</dbReference>
<dbReference type="Proteomes" id="UP000002670">
    <property type="component" value="Chromosome"/>
</dbReference>
<dbReference type="GO" id="GO:0005829">
    <property type="term" value="C:cytosol"/>
    <property type="evidence" value="ECO:0007669"/>
    <property type="project" value="UniProtKB-ARBA"/>
</dbReference>
<dbReference type="GO" id="GO:0006353">
    <property type="term" value="P:DNA-templated transcription termination"/>
    <property type="evidence" value="ECO:0007669"/>
    <property type="project" value="UniProtKB-UniRule"/>
</dbReference>
<dbReference type="GO" id="GO:0032784">
    <property type="term" value="P:regulation of DNA-templated transcription elongation"/>
    <property type="evidence" value="ECO:0007669"/>
    <property type="project" value="InterPro"/>
</dbReference>
<dbReference type="GO" id="GO:0031564">
    <property type="term" value="P:transcription antitermination"/>
    <property type="evidence" value="ECO:0007669"/>
    <property type="project" value="UniProtKB-UniRule"/>
</dbReference>
<dbReference type="GO" id="GO:0140673">
    <property type="term" value="P:transcription elongation-coupled chromatin remodeling"/>
    <property type="evidence" value="ECO:0007669"/>
    <property type="project" value="InterPro"/>
</dbReference>
<dbReference type="CDD" id="cd06091">
    <property type="entry name" value="KOW_NusG"/>
    <property type="match status" value="1"/>
</dbReference>
<dbReference type="CDD" id="cd09891">
    <property type="entry name" value="NGN_Bact_1"/>
    <property type="match status" value="1"/>
</dbReference>
<dbReference type="FunFam" id="2.30.30.30:FF:000002">
    <property type="entry name" value="Transcription termination/antitermination factor NusG"/>
    <property type="match status" value="1"/>
</dbReference>
<dbReference type="FunFam" id="3.30.70.940:FF:000001">
    <property type="entry name" value="Transcription termination/antitermination protein NusG"/>
    <property type="match status" value="1"/>
</dbReference>
<dbReference type="Gene3D" id="2.30.30.30">
    <property type="match status" value="1"/>
</dbReference>
<dbReference type="Gene3D" id="3.30.70.940">
    <property type="entry name" value="NusG, N-terminal domain"/>
    <property type="match status" value="1"/>
</dbReference>
<dbReference type="HAMAP" id="MF_00948">
    <property type="entry name" value="NusG"/>
    <property type="match status" value="1"/>
</dbReference>
<dbReference type="InterPro" id="IPR005824">
    <property type="entry name" value="KOW"/>
</dbReference>
<dbReference type="InterPro" id="IPR047050">
    <property type="entry name" value="NGN"/>
</dbReference>
<dbReference type="InterPro" id="IPR006645">
    <property type="entry name" value="NGN-like_dom"/>
</dbReference>
<dbReference type="InterPro" id="IPR036735">
    <property type="entry name" value="NGN_dom_sf"/>
</dbReference>
<dbReference type="InterPro" id="IPR043425">
    <property type="entry name" value="NusG-like"/>
</dbReference>
<dbReference type="InterPro" id="IPR014722">
    <property type="entry name" value="Rib_uL2_dom2"/>
</dbReference>
<dbReference type="InterPro" id="IPR001062">
    <property type="entry name" value="Transcrpt_antiterm_NusG"/>
</dbReference>
<dbReference type="InterPro" id="IPR015869">
    <property type="entry name" value="Transcrpt_antiterm_NusG_bac_CS"/>
</dbReference>
<dbReference type="InterPro" id="IPR008991">
    <property type="entry name" value="Translation_prot_SH3-like_sf"/>
</dbReference>
<dbReference type="NCBIfam" id="TIGR00922">
    <property type="entry name" value="nusG"/>
    <property type="match status" value="1"/>
</dbReference>
<dbReference type="PANTHER" id="PTHR30265">
    <property type="entry name" value="RHO-INTERACTING TRANSCRIPTION TERMINATION FACTOR NUSG"/>
    <property type="match status" value="1"/>
</dbReference>
<dbReference type="PANTHER" id="PTHR30265:SF2">
    <property type="entry name" value="TRANSCRIPTION TERMINATION_ANTITERMINATION PROTEIN NUSG"/>
    <property type="match status" value="1"/>
</dbReference>
<dbReference type="Pfam" id="PF00467">
    <property type="entry name" value="KOW"/>
    <property type="match status" value="1"/>
</dbReference>
<dbReference type="Pfam" id="PF02357">
    <property type="entry name" value="NusG"/>
    <property type="match status" value="1"/>
</dbReference>
<dbReference type="PRINTS" id="PR00338">
    <property type="entry name" value="NUSGTNSCPFCT"/>
</dbReference>
<dbReference type="SMART" id="SM00739">
    <property type="entry name" value="KOW"/>
    <property type="match status" value="1"/>
</dbReference>
<dbReference type="SMART" id="SM00738">
    <property type="entry name" value="NGN"/>
    <property type="match status" value="1"/>
</dbReference>
<dbReference type="SUPFAM" id="SSF82679">
    <property type="entry name" value="N-utilization substance G protein NusG, N-terminal domain"/>
    <property type="match status" value="1"/>
</dbReference>
<dbReference type="SUPFAM" id="SSF50104">
    <property type="entry name" value="Translation proteins SH3-like domain"/>
    <property type="match status" value="1"/>
</dbReference>
<dbReference type="PROSITE" id="PS01014">
    <property type="entry name" value="NUSG"/>
    <property type="match status" value="1"/>
</dbReference>
<accession>P0AA03</accession>
<accession>Q9L9K0</accession>
<organism>
    <name type="scientific">Salmonella typhi</name>
    <dbReference type="NCBI Taxonomy" id="90370"/>
    <lineage>
        <taxon>Bacteria</taxon>
        <taxon>Pseudomonadati</taxon>
        <taxon>Pseudomonadota</taxon>
        <taxon>Gammaproteobacteria</taxon>
        <taxon>Enterobacterales</taxon>
        <taxon>Enterobacteriaceae</taxon>
        <taxon>Salmonella</taxon>
    </lineage>
</organism>
<proteinExistence type="inferred from homology"/>
<sequence>MSEAPKKRWYVVQAFSGFEGRVATSLREHIKLHNMEELFGEVMVPTEEVVEIRGGQRRKSERKFFPGYVLVQMVMNDASWHLVRSVPRVMGFIGGTSDRPAPISDKEVDAIMNRLQQVGDKPRPKTLFEPGEMVRVNDGPFADFNGVVEEVDYEKSRLKVSVSIFGRATPVELDFSQVEKA</sequence>
<protein>
    <recommendedName>
        <fullName evidence="2">Transcription termination/antitermination protein NusG</fullName>
    </recommendedName>
</protein>
<evidence type="ECO:0000250" key="1"/>
<evidence type="ECO:0000255" key="2">
    <source>
        <dbReference type="HAMAP-Rule" id="MF_00948"/>
    </source>
</evidence>
<name>NUSG_SALTI</name>
<keyword id="KW-0804">Transcription</keyword>
<keyword id="KW-0889">Transcription antitermination</keyword>
<keyword id="KW-0805">Transcription regulation</keyword>
<keyword id="KW-0806">Transcription termination</keyword>
<feature type="initiator methionine" description="Removed" evidence="1">
    <location>
        <position position="1"/>
    </location>
</feature>
<feature type="chain" id="PRO_0000113943" description="Transcription termination/antitermination protein NusG">
    <location>
        <begin position="2"/>
        <end position="181"/>
    </location>
</feature>
<feature type="domain" description="KOW" evidence="2">
    <location>
        <begin position="130"/>
        <end position="161"/>
    </location>
</feature>
<reference key="1">
    <citation type="journal article" date="2001" name="Nature">
        <title>Complete genome sequence of a multiple drug resistant Salmonella enterica serovar Typhi CT18.</title>
        <authorList>
            <person name="Parkhill J."/>
            <person name="Dougan G."/>
            <person name="James K.D."/>
            <person name="Thomson N.R."/>
            <person name="Pickard D."/>
            <person name="Wain J."/>
            <person name="Churcher C.M."/>
            <person name="Mungall K.L."/>
            <person name="Bentley S.D."/>
            <person name="Holden M.T.G."/>
            <person name="Sebaihia M."/>
            <person name="Baker S."/>
            <person name="Basham D."/>
            <person name="Brooks K."/>
            <person name="Chillingworth T."/>
            <person name="Connerton P."/>
            <person name="Cronin A."/>
            <person name="Davis P."/>
            <person name="Davies R.M."/>
            <person name="Dowd L."/>
            <person name="White N."/>
            <person name="Farrar J."/>
            <person name="Feltwell T."/>
            <person name="Hamlin N."/>
            <person name="Haque A."/>
            <person name="Hien T.T."/>
            <person name="Holroyd S."/>
            <person name="Jagels K."/>
            <person name="Krogh A."/>
            <person name="Larsen T.S."/>
            <person name="Leather S."/>
            <person name="Moule S."/>
            <person name="O'Gaora P."/>
            <person name="Parry C."/>
            <person name="Quail M.A."/>
            <person name="Rutherford K.M."/>
            <person name="Simmonds M."/>
            <person name="Skelton J."/>
            <person name="Stevens K."/>
            <person name="Whitehead S."/>
            <person name="Barrell B.G."/>
        </authorList>
    </citation>
    <scope>NUCLEOTIDE SEQUENCE [LARGE SCALE GENOMIC DNA]</scope>
    <source>
        <strain>CT18</strain>
    </source>
</reference>
<reference key="2">
    <citation type="journal article" date="2003" name="J. Bacteriol.">
        <title>Comparative genomics of Salmonella enterica serovar Typhi strains Ty2 and CT18.</title>
        <authorList>
            <person name="Deng W."/>
            <person name="Liou S.-R."/>
            <person name="Plunkett G. III"/>
            <person name="Mayhew G.F."/>
            <person name="Rose D.J."/>
            <person name="Burland V."/>
            <person name="Kodoyianni V."/>
            <person name="Schwartz D.C."/>
            <person name="Blattner F.R."/>
        </authorList>
    </citation>
    <scope>NUCLEOTIDE SEQUENCE [LARGE SCALE GENOMIC DNA]</scope>
    <source>
        <strain>ATCC 700931 / Ty2</strain>
    </source>
</reference>
<gene>
    <name evidence="2" type="primary">nusG</name>
    <name type="ordered locus">STY3737</name>
    <name type="ordered locus">t3479</name>
</gene>